<comment type="function">
    <text evidence="1">Catalyzes the transfer of the phosphoribosyl group of 5-phosphorylribose-1-pyrophosphate (PRPP) to anthranilate to yield N-(5'-phosphoribosyl)-anthranilate (PRA).</text>
</comment>
<comment type="catalytic activity">
    <reaction evidence="1">
        <text>N-(5-phospho-beta-D-ribosyl)anthranilate + diphosphate = 5-phospho-alpha-D-ribose 1-diphosphate + anthranilate</text>
        <dbReference type="Rhea" id="RHEA:11768"/>
        <dbReference type="ChEBI" id="CHEBI:16567"/>
        <dbReference type="ChEBI" id="CHEBI:18277"/>
        <dbReference type="ChEBI" id="CHEBI:33019"/>
        <dbReference type="ChEBI" id="CHEBI:58017"/>
        <dbReference type="EC" id="2.4.2.18"/>
    </reaction>
</comment>
<comment type="cofactor">
    <cofactor evidence="1">
        <name>Mg(2+)</name>
        <dbReference type="ChEBI" id="CHEBI:18420"/>
    </cofactor>
    <text evidence="1">Binds 2 magnesium ions per monomer.</text>
</comment>
<comment type="pathway">
    <text evidence="1">Amino-acid biosynthesis; L-tryptophan biosynthesis; L-tryptophan from chorismate: step 2/5.</text>
</comment>
<comment type="subunit">
    <text evidence="1">Homodimer.</text>
</comment>
<comment type="similarity">
    <text evidence="1">Belongs to the anthranilate phosphoribosyltransferase family.</text>
</comment>
<gene>
    <name evidence="1" type="primary">trpD</name>
    <name type="ordered locus">Ping_1058</name>
</gene>
<name>TRPD_PSYIN</name>
<evidence type="ECO:0000255" key="1">
    <source>
        <dbReference type="HAMAP-Rule" id="MF_00211"/>
    </source>
</evidence>
<accession>A1STT2</accession>
<reference key="1">
    <citation type="journal article" date="2008" name="BMC Genomics">
        <title>Genomics of an extreme psychrophile, Psychromonas ingrahamii.</title>
        <authorList>
            <person name="Riley M."/>
            <person name="Staley J.T."/>
            <person name="Danchin A."/>
            <person name="Wang T.Z."/>
            <person name="Brettin T.S."/>
            <person name="Hauser L.J."/>
            <person name="Land M.L."/>
            <person name="Thompson L.S."/>
        </authorList>
    </citation>
    <scope>NUCLEOTIDE SEQUENCE [LARGE SCALE GENOMIC DNA]</scope>
    <source>
        <strain>DSM 17664 / CCUG 51855 / 37</strain>
    </source>
</reference>
<dbReference type="EC" id="2.4.2.18" evidence="1"/>
<dbReference type="EMBL" id="CP000510">
    <property type="protein sequence ID" value="ABM02897.1"/>
    <property type="molecule type" value="Genomic_DNA"/>
</dbReference>
<dbReference type="RefSeq" id="WP_011769460.1">
    <property type="nucleotide sequence ID" value="NC_008709.1"/>
</dbReference>
<dbReference type="SMR" id="A1STT2"/>
<dbReference type="STRING" id="357804.Ping_1058"/>
<dbReference type="KEGG" id="pin:Ping_1058"/>
<dbReference type="eggNOG" id="COG0547">
    <property type="taxonomic scope" value="Bacteria"/>
</dbReference>
<dbReference type="HOGENOM" id="CLU_034315_2_1_6"/>
<dbReference type="OrthoDB" id="9806430at2"/>
<dbReference type="UniPathway" id="UPA00035">
    <property type="reaction ID" value="UER00041"/>
</dbReference>
<dbReference type="Proteomes" id="UP000000639">
    <property type="component" value="Chromosome"/>
</dbReference>
<dbReference type="GO" id="GO:0005829">
    <property type="term" value="C:cytosol"/>
    <property type="evidence" value="ECO:0007669"/>
    <property type="project" value="TreeGrafter"/>
</dbReference>
<dbReference type="GO" id="GO:0004048">
    <property type="term" value="F:anthranilate phosphoribosyltransferase activity"/>
    <property type="evidence" value="ECO:0007669"/>
    <property type="project" value="UniProtKB-UniRule"/>
</dbReference>
<dbReference type="GO" id="GO:0000287">
    <property type="term" value="F:magnesium ion binding"/>
    <property type="evidence" value="ECO:0007669"/>
    <property type="project" value="UniProtKB-UniRule"/>
</dbReference>
<dbReference type="GO" id="GO:0000162">
    <property type="term" value="P:L-tryptophan biosynthetic process"/>
    <property type="evidence" value="ECO:0007669"/>
    <property type="project" value="UniProtKB-UniRule"/>
</dbReference>
<dbReference type="FunFam" id="3.40.1030.10:FF:000002">
    <property type="entry name" value="Anthranilate phosphoribosyltransferase"/>
    <property type="match status" value="1"/>
</dbReference>
<dbReference type="Gene3D" id="3.40.1030.10">
    <property type="entry name" value="Nucleoside phosphorylase/phosphoribosyltransferase catalytic domain"/>
    <property type="match status" value="1"/>
</dbReference>
<dbReference type="Gene3D" id="1.20.970.10">
    <property type="entry name" value="Transferase, Pyrimidine Nucleoside Phosphorylase, Chain C"/>
    <property type="match status" value="1"/>
</dbReference>
<dbReference type="HAMAP" id="MF_00211">
    <property type="entry name" value="TrpD"/>
    <property type="match status" value="1"/>
</dbReference>
<dbReference type="InterPro" id="IPR005940">
    <property type="entry name" value="Anthranilate_Pribosyl_Tfrase"/>
</dbReference>
<dbReference type="InterPro" id="IPR000312">
    <property type="entry name" value="Glycosyl_Trfase_fam3"/>
</dbReference>
<dbReference type="InterPro" id="IPR017459">
    <property type="entry name" value="Glycosyl_Trfase_fam3_N_dom"/>
</dbReference>
<dbReference type="InterPro" id="IPR036320">
    <property type="entry name" value="Glycosyl_Trfase_fam3_N_dom_sf"/>
</dbReference>
<dbReference type="InterPro" id="IPR035902">
    <property type="entry name" value="Nuc_phospho_transferase"/>
</dbReference>
<dbReference type="NCBIfam" id="TIGR01245">
    <property type="entry name" value="trpD"/>
    <property type="match status" value="1"/>
</dbReference>
<dbReference type="PANTHER" id="PTHR43285">
    <property type="entry name" value="ANTHRANILATE PHOSPHORIBOSYLTRANSFERASE"/>
    <property type="match status" value="1"/>
</dbReference>
<dbReference type="PANTHER" id="PTHR43285:SF2">
    <property type="entry name" value="ANTHRANILATE PHOSPHORIBOSYLTRANSFERASE"/>
    <property type="match status" value="1"/>
</dbReference>
<dbReference type="Pfam" id="PF02885">
    <property type="entry name" value="Glycos_trans_3N"/>
    <property type="match status" value="1"/>
</dbReference>
<dbReference type="Pfam" id="PF00591">
    <property type="entry name" value="Glycos_transf_3"/>
    <property type="match status" value="1"/>
</dbReference>
<dbReference type="SUPFAM" id="SSF52418">
    <property type="entry name" value="Nucleoside phosphorylase/phosphoribosyltransferase catalytic domain"/>
    <property type="match status" value="1"/>
</dbReference>
<dbReference type="SUPFAM" id="SSF47648">
    <property type="entry name" value="Nucleoside phosphorylase/phosphoribosyltransferase N-terminal domain"/>
    <property type="match status" value="1"/>
</dbReference>
<proteinExistence type="inferred from homology"/>
<organism>
    <name type="scientific">Psychromonas ingrahamii (strain DSM 17664 / CCUG 51855 / 37)</name>
    <dbReference type="NCBI Taxonomy" id="357804"/>
    <lineage>
        <taxon>Bacteria</taxon>
        <taxon>Pseudomonadati</taxon>
        <taxon>Pseudomonadota</taxon>
        <taxon>Gammaproteobacteria</taxon>
        <taxon>Alteromonadales</taxon>
        <taxon>Psychromonadaceae</taxon>
        <taxon>Psychromonas</taxon>
    </lineage>
</organism>
<protein>
    <recommendedName>
        <fullName evidence="1">Anthranilate phosphoribosyltransferase</fullName>
        <ecNumber evidence="1">2.4.2.18</ecNumber>
    </recommendedName>
</protein>
<keyword id="KW-0028">Amino-acid biosynthesis</keyword>
<keyword id="KW-0057">Aromatic amino acid biosynthesis</keyword>
<keyword id="KW-0328">Glycosyltransferase</keyword>
<keyword id="KW-0460">Magnesium</keyword>
<keyword id="KW-0479">Metal-binding</keyword>
<keyword id="KW-1185">Reference proteome</keyword>
<keyword id="KW-0808">Transferase</keyword>
<keyword id="KW-0822">Tryptophan biosynthesis</keyword>
<sequence>MSSFNIHEILEQLYAAKSLTSEQSQAFFERVVQGQVDPIILSSVLTALKIKGETAQEITGAANALLAQATPFPRPDYDFTDIVGTGGDGLGTINISTASAFVAAACGLKVCKHGSRSVSSKSGSSDLLAAFGLNLDMSAQQARQCLDDLNICFLFAPQYHAGMRFAAPVRAALKTRSIFNVLGPLINPARPQFELMGVYAPELLKPIAEVHKELGMKRVMVVYGSGLDEIALHGETQVAELIDGKIIEYTLTPEDFGVQHYPVEAIIGGDPSENKIIIEQILQGKGSDAQQAAVAVNVSALLVLNGKADNFKEGTKQALAMMLTGKPLQLLKTLAERSQC</sequence>
<feature type="chain" id="PRO_0000325451" description="Anthranilate phosphoribosyltransferase">
    <location>
        <begin position="1"/>
        <end position="340"/>
    </location>
</feature>
<feature type="binding site" evidence="1">
    <location>
        <position position="84"/>
    </location>
    <ligand>
        <name>5-phospho-alpha-D-ribose 1-diphosphate</name>
        <dbReference type="ChEBI" id="CHEBI:58017"/>
    </ligand>
</feature>
<feature type="binding site" evidence="1">
    <location>
        <position position="84"/>
    </location>
    <ligand>
        <name>anthranilate</name>
        <dbReference type="ChEBI" id="CHEBI:16567"/>
        <label>1</label>
    </ligand>
</feature>
<feature type="binding site" evidence="1">
    <location>
        <begin position="87"/>
        <end position="88"/>
    </location>
    <ligand>
        <name>5-phospho-alpha-D-ribose 1-diphosphate</name>
        <dbReference type="ChEBI" id="CHEBI:58017"/>
    </ligand>
</feature>
<feature type="binding site" evidence="1">
    <location>
        <position position="92"/>
    </location>
    <ligand>
        <name>5-phospho-alpha-D-ribose 1-diphosphate</name>
        <dbReference type="ChEBI" id="CHEBI:58017"/>
    </ligand>
</feature>
<feature type="binding site" evidence="1">
    <location>
        <begin position="94"/>
        <end position="97"/>
    </location>
    <ligand>
        <name>5-phospho-alpha-D-ribose 1-diphosphate</name>
        <dbReference type="ChEBI" id="CHEBI:58017"/>
    </ligand>
</feature>
<feature type="binding site" evidence="1">
    <location>
        <position position="96"/>
    </location>
    <ligand>
        <name>Mg(2+)</name>
        <dbReference type="ChEBI" id="CHEBI:18420"/>
        <label>1</label>
    </ligand>
</feature>
<feature type="binding site" evidence="1">
    <location>
        <begin position="112"/>
        <end position="120"/>
    </location>
    <ligand>
        <name>5-phospho-alpha-D-ribose 1-diphosphate</name>
        <dbReference type="ChEBI" id="CHEBI:58017"/>
    </ligand>
</feature>
<feature type="binding site" evidence="1">
    <location>
        <position position="124"/>
    </location>
    <ligand>
        <name>5-phospho-alpha-D-ribose 1-diphosphate</name>
        <dbReference type="ChEBI" id="CHEBI:58017"/>
    </ligand>
</feature>
<feature type="binding site" evidence="1">
    <location>
        <position position="170"/>
    </location>
    <ligand>
        <name>anthranilate</name>
        <dbReference type="ChEBI" id="CHEBI:16567"/>
        <label>2</label>
    </ligand>
</feature>
<feature type="binding site" evidence="1">
    <location>
        <position position="228"/>
    </location>
    <ligand>
        <name>Mg(2+)</name>
        <dbReference type="ChEBI" id="CHEBI:18420"/>
        <label>2</label>
    </ligand>
</feature>
<feature type="binding site" evidence="1">
    <location>
        <position position="229"/>
    </location>
    <ligand>
        <name>Mg(2+)</name>
        <dbReference type="ChEBI" id="CHEBI:18420"/>
        <label>1</label>
    </ligand>
</feature>
<feature type="binding site" evidence="1">
    <location>
        <position position="229"/>
    </location>
    <ligand>
        <name>Mg(2+)</name>
        <dbReference type="ChEBI" id="CHEBI:18420"/>
        <label>2</label>
    </ligand>
</feature>